<feature type="chain" id="PRO_1000192940" description="Putative pterin-4-alpha-carbinolamine dehydratase">
    <location>
        <begin position="1"/>
        <end position="116"/>
    </location>
</feature>
<evidence type="ECO:0000255" key="1">
    <source>
        <dbReference type="HAMAP-Rule" id="MF_00434"/>
    </source>
</evidence>
<keyword id="KW-0456">Lyase</keyword>
<comment type="catalytic activity">
    <reaction evidence="1">
        <text>(4aS,6R)-4a-hydroxy-L-erythro-5,6,7,8-tetrahydrobiopterin = (6R)-L-erythro-6,7-dihydrobiopterin + H2O</text>
        <dbReference type="Rhea" id="RHEA:11920"/>
        <dbReference type="ChEBI" id="CHEBI:15377"/>
        <dbReference type="ChEBI" id="CHEBI:15642"/>
        <dbReference type="ChEBI" id="CHEBI:43120"/>
        <dbReference type="EC" id="4.2.1.96"/>
    </reaction>
</comment>
<comment type="similarity">
    <text evidence="1">Belongs to the pterin-4-alpha-carbinolamine dehydratase family.</text>
</comment>
<dbReference type="EC" id="4.2.1.96" evidence="1"/>
<dbReference type="EMBL" id="CP001111">
    <property type="protein sequence ID" value="ACF52374.1"/>
    <property type="molecule type" value="Genomic_DNA"/>
</dbReference>
<dbReference type="RefSeq" id="WP_006377739.1">
    <property type="nucleotide sequence ID" value="NC_011071.1"/>
</dbReference>
<dbReference type="SMR" id="B4SPV4"/>
<dbReference type="STRING" id="391008.Smal_2674"/>
<dbReference type="KEGG" id="smt:Smal_2674"/>
<dbReference type="eggNOG" id="COG2154">
    <property type="taxonomic scope" value="Bacteria"/>
</dbReference>
<dbReference type="HOGENOM" id="CLU_081974_2_1_6"/>
<dbReference type="OrthoDB" id="5294615at2"/>
<dbReference type="Proteomes" id="UP000001867">
    <property type="component" value="Chromosome"/>
</dbReference>
<dbReference type="GO" id="GO:0008124">
    <property type="term" value="F:4-alpha-hydroxytetrahydrobiopterin dehydratase activity"/>
    <property type="evidence" value="ECO:0007669"/>
    <property type="project" value="UniProtKB-UniRule"/>
</dbReference>
<dbReference type="GO" id="GO:0006729">
    <property type="term" value="P:tetrahydrobiopterin biosynthetic process"/>
    <property type="evidence" value="ECO:0007669"/>
    <property type="project" value="InterPro"/>
</dbReference>
<dbReference type="CDD" id="cd00913">
    <property type="entry name" value="PCD_DCoH_subfamily_a"/>
    <property type="match status" value="1"/>
</dbReference>
<dbReference type="Gene3D" id="3.30.1360.20">
    <property type="entry name" value="Transcriptional coactivator/pterin dehydratase"/>
    <property type="match status" value="1"/>
</dbReference>
<dbReference type="HAMAP" id="MF_00434">
    <property type="entry name" value="Pterin_4_alpha"/>
    <property type="match status" value="1"/>
</dbReference>
<dbReference type="InterPro" id="IPR036428">
    <property type="entry name" value="PCD_sf"/>
</dbReference>
<dbReference type="InterPro" id="IPR001533">
    <property type="entry name" value="Pterin_deHydtase"/>
</dbReference>
<dbReference type="NCBIfam" id="NF002019">
    <property type="entry name" value="PRK00823.1-4"/>
    <property type="match status" value="1"/>
</dbReference>
<dbReference type="PANTHER" id="PTHR12599">
    <property type="entry name" value="PTERIN-4-ALPHA-CARBINOLAMINE DEHYDRATASE"/>
    <property type="match status" value="1"/>
</dbReference>
<dbReference type="PANTHER" id="PTHR12599:SF0">
    <property type="entry name" value="PTERIN-4-ALPHA-CARBINOLAMINE DEHYDRATASE"/>
    <property type="match status" value="1"/>
</dbReference>
<dbReference type="Pfam" id="PF01329">
    <property type="entry name" value="Pterin_4a"/>
    <property type="match status" value="1"/>
</dbReference>
<dbReference type="SUPFAM" id="SSF55248">
    <property type="entry name" value="PCD-like"/>
    <property type="match status" value="1"/>
</dbReference>
<accession>B4SPV4</accession>
<protein>
    <recommendedName>
        <fullName evidence="1">Putative pterin-4-alpha-carbinolamine dehydratase</fullName>
        <shortName evidence="1">PHS</shortName>
        <ecNumber evidence="1">4.2.1.96</ecNumber>
    </recommendedName>
    <alternativeName>
        <fullName evidence="1">4-alpha-hydroxy-tetrahydropterin dehydratase</fullName>
    </alternativeName>
    <alternativeName>
        <fullName evidence="1">Pterin carbinolamine dehydratase</fullName>
        <shortName evidence="1">PCD</shortName>
    </alternativeName>
</protein>
<gene>
    <name type="ordered locus">Smal_2674</name>
</gene>
<proteinExistence type="inferred from homology"/>
<name>PHS_STRM5</name>
<reference key="1">
    <citation type="submission" date="2008-06" db="EMBL/GenBank/DDBJ databases">
        <title>Complete sequence of Stenotrophomonas maltophilia R551-3.</title>
        <authorList>
            <consortium name="US DOE Joint Genome Institute"/>
            <person name="Lucas S."/>
            <person name="Copeland A."/>
            <person name="Lapidus A."/>
            <person name="Glavina del Rio T."/>
            <person name="Dalin E."/>
            <person name="Tice H."/>
            <person name="Pitluck S."/>
            <person name="Chain P."/>
            <person name="Malfatti S."/>
            <person name="Shin M."/>
            <person name="Vergez L."/>
            <person name="Lang D."/>
            <person name="Schmutz J."/>
            <person name="Larimer F."/>
            <person name="Land M."/>
            <person name="Hauser L."/>
            <person name="Kyrpides N."/>
            <person name="Mikhailova N."/>
            <person name="Taghavi S."/>
            <person name="Monchy S."/>
            <person name="Newman L."/>
            <person name="Vangronsveld J."/>
            <person name="van der Lelie D."/>
            <person name="Richardson P."/>
        </authorList>
    </citation>
    <scope>NUCLEOTIDE SEQUENCE [LARGE SCALE GENOMIC DNA]</scope>
    <source>
        <strain>R551-3</strain>
    </source>
</reference>
<organism>
    <name type="scientific">Stenotrophomonas maltophilia (strain R551-3)</name>
    <dbReference type="NCBI Taxonomy" id="391008"/>
    <lineage>
        <taxon>Bacteria</taxon>
        <taxon>Pseudomonadati</taxon>
        <taxon>Pseudomonadota</taxon>
        <taxon>Gammaproteobacteria</taxon>
        <taxon>Lysobacterales</taxon>
        <taxon>Lysobacteraceae</taxon>
        <taxon>Stenotrophomonas</taxon>
        <taxon>Stenotrophomonas maltophilia group</taxon>
    </lineage>
</organism>
<sequence>MADLIPLAQARCVPRKGSDHKLGEARLAELLPQVPGWELSEGGQALLRTFRFKNYYATMAFVNALAWIAHHEDHHPDLGVHYDRAVVRFSTHDVGGLSENDFICAAKTSALTEQLP</sequence>